<keyword id="KW-0963">Cytoplasm</keyword>
<gene>
    <name type="primary">RGI2</name>
    <name type="ORF">EC1118_1I12_1332g</name>
</gene>
<dbReference type="EMBL" id="FN393074">
    <property type="protein sequence ID" value="CAY80453.1"/>
    <property type="molecule type" value="Genomic_DNA"/>
</dbReference>
<dbReference type="SMR" id="C8ZAJ0"/>
<dbReference type="HOGENOM" id="CLU_118207_0_0_1"/>
<dbReference type="OrthoDB" id="15655at4893"/>
<dbReference type="Proteomes" id="UP000000286">
    <property type="component" value="Chromosome IX, Scaffold EC1118_1I12"/>
</dbReference>
<dbReference type="GO" id="GO:0005737">
    <property type="term" value="C:cytoplasm"/>
    <property type="evidence" value="ECO:0007669"/>
    <property type="project" value="UniProtKB-SubCell"/>
</dbReference>
<dbReference type="GO" id="GO:0006112">
    <property type="term" value="P:energy reserve metabolic process"/>
    <property type="evidence" value="ECO:0007669"/>
    <property type="project" value="InterPro"/>
</dbReference>
<dbReference type="FunFam" id="3.40.1000.40:FF:000001">
    <property type="entry name" value="Respiratory growth induced protein 2"/>
    <property type="match status" value="1"/>
</dbReference>
<dbReference type="Gene3D" id="3.40.1000.40">
    <property type="entry name" value="Respiratory growth induced protein 1"/>
    <property type="match status" value="1"/>
</dbReference>
<dbReference type="InterPro" id="IPR022554">
    <property type="entry name" value="RGI1"/>
</dbReference>
<dbReference type="InterPro" id="IPR038235">
    <property type="entry name" value="RGI1_sf"/>
</dbReference>
<dbReference type="Pfam" id="PF10843">
    <property type="entry name" value="RGI1"/>
    <property type="match status" value="1"/>
</dbReference>
<name>RGI2_YEAS8</name>
<organism>
    <name type="scientific">Saccharomyces cerevisiae (strain Lalvin EC1118 / Prise de mousse)</name>
    <name type="common">Baker's yeast</name>
    <dbReference type="NCBI Taxonomy" id="643680"/>
    <lineage>
        <taxon>Eukaryota</taxon>
        <taxon>Fungi</taxon>
        <taxon>Dikarya</taxon>
        <taxon>Ascomycota</taxon>
        <taxon>Saccharomycotina</taxon>
        <taxon>Saccharomycetes</taxon>
        <taxon>Saccharomycetales</taxon>
        <taxon>Saccharomycetaceae</taxon>
        <taxon>Saccharomyces</taxon>
    </lineage>
</organism>
<feature type="chain" id="PRO_0000402302" description="Respiratory growth induced protein 2">
    <location>
        <begin position="1"/>
        <end position="164"/>
    </location>
</feature>
<evidence type="ECO:0000250" key="1"/>
<evidence type="ECO:0000305" key="2"/>
<comment type="function">
    <text evidence="1">Involved in the control of energetic metabolism and significantly contribute to cell fitness, especially under respiratory growth conditions.</text>
</comment>
<comment type="subcellular location">
    <subcellularLocation>
        <location evidence="1">Cytoplasm</location>
    </subcellularLocation>
</comment>
<comment type="similarity">
    <text evidence="2">Belongs to the RGI1 family.</text>
</comment>
<sequence length="164" mass="19257">MTKKDKKAKGPKMSTITTKSGESLKVFEDLHDFETYLKGETEDQEFDHVHCQLKYYPPFVLHDAHDDPEKIKETANSHSKKFVRHLHQHVEKHLLKDIKTAINKPELKFHDKKKQESFDRIVWNYGEETELNAKKFKVSVEVVCKHDGAMVDVDYRTEPLQPLI</sequence>
<proteinExistence type="inferred from homology"/>
<protein>
    <recommendedName>
        <fullName>Respiratory growth induced protein 2</fullName>
    </recommendedName>
</protein>
<reference key="1">
    <citation type="journal article" date="2009" name="Proc. Natl. Acad. Sci. U.S.A.">
        <title>Eukaryote-to-eukaryote gene transfer events revealed by the genome sequence of the wine yeast Saccharomyces cerevisiae EC1118.</title>
        <authorList>
            <person name="Novo M."/>
            <person name="Bigey F."/>
            <person name="Beyne E."/>
            <person name="Galeote V."/>
            <person name="Gavory F."/>
            <person name="Mallet S."/>
            <person name="Cambon B."/>
            <person name="Legras J.-L."/>
            <person name="Wincker P."/>
            <person name="Casaregola S."/>
            <person name="Dequin S."/>
        </authorList>
    </citation>
    <scope>NUCLEOTIDE SEQUENCE [LARGE SCALE GENOMIC DNA]</scope>
    <source>
        <strain>Lalvin EC1118 / Prise de mousse</strain>
    </source>
</reference>
<accession>C8ZAJ0</accession>